<dbReference type="EMBL" id="AE017333">
    <property type="protein sequence ID" value="AAU40719.1"/>
    <property type="molecule type" value="Genomic_DNA"/>
</dbReference>
<dbReference type="EMBL" id="CP000002">
    <property type="protein sequence ID" value="AAU23359.1"/>
    <property type="molecule type" value="Genomic_DNA"/>
</dbReference>
<dbReference type="RefSeq" id="WP_003181728.1">
    <property type="nucleotide sequence ID" value="NC_006322.1"/>
</dbReference>
<dbReference type="SMR" id="Q65JP5"/>
<dbReference type="STRING" id="279010.BL01290"/>
<dbReference type="GeneID" id="92861583"/>
<dbReference type="KEGG" id="bld:BLi01824"/>
<dbReference type="KEGG" id="bli:BL01290"/>
<dbReference type="eggNOG" id="COG0335">
    <property type="taxonomic scope" value="Bacteria"/>
</dbReference>
<dbReference type="HOGENOM" id="CLU_103507_2_1_9"/>
<dbReference type="Proteomes" id="UP000000606">
    <property type="component" value="Chromosome"/>
</dbReference>
<dbReference type="GO" id="GO:0022625">
    <property type="term" value="C:cytosolic large ribosomal subunit"/>
    <property type="evidence" value="ECO:0007669"/>
    <property type="project" value="TreeGrafter"/>
</dbReference>
<dbReference type="GO" id="GO:0003735">
    <property type="term" value="F:structural constituent of ribosome"/>
    <property type="evidence" value="ECO:0007669"/>
    <property type="project" value="InterPro"/>
</dbReference>
<dbReference type="GO" id="GO:0006412">
    <property type="term" value="P:translation"/>
    <property type="evidence" value="ECO:0007669"/>
    <property type="project" value="UniProtKB-UniRule"/>
</dbReference>
<dbReference type="FunFam" id="2.30.30.790:FF:000001">
    <property type="entry name" value="50S ribosomal protein L19"/>
    <property type="match status" value="1"/>
</dbReference>
<dbReference type="Gene3D" id="2.30.30.790">
    <property type="match status" value="1"/>
</dbReference>
<dbReference type="HAMAP" id="MF_00402">
    <property type="entry name" value="Ribosomal_bL19"/>
    <property type="match status" value="1"/>
</dbReference>
<dbReference type="InterPro" id="IPR001857">
    <property type="entry name" value="Ribosomal_bL19"/>
</dbReference>
<dbReference type="InterPro" id="IPR018257">
    <property type="entry name" value="Ribosomal_bL19_CS"/>
</dbReference>
<dbReference type="InterPro" id="IPR038657">
    <property type="entry name" value="Ribosomal_bL19_sf"/>
</dbReference>
<dbReference type="InterPro" id="IPR008991">
    <property type="entry name" value="Translation_prot_SH3-like_sf"/>
</dbReference>
<dbReference type="NCBIfam" id="TIGR01024">
    <property type="entry name" value="rplS_bact"/>
    <property type="match status" value="1"/>
</dbReference>
<dbReference type="PANTHER" id="PTHR15680:SF9">
    <property type="entry name" value="LARGE RIBOSOMAL SUBUNIT PROTEIN BL19M"/>
    <property type="match status" value="1"/>
</dbReference>
<dbReference type="PANTHER" id="PTHR15680">
    <property type="entry name" value="RIBOSOMAL PROTEIN L19"/>
    <property type="match status" value="1"/>
</dbReference>
<dbReference type="Pfam" id="PF01245">
    <property type="entry name" value="Ribosomal_L19"/>
    <property type="match status" value="1"/>
</dbReference>
<dbReference type="PIRSF" id="PIRSF002191">
    <property type="entry name" value="Ribosomal_L19"/>
    <property type="match status" value="1"/>
</dbReference>
<dbReference type="PRINTS" id="PR00061">
    <property type="entry name" value="RIBOSOMALL19"/>
</dbReference>
<dbReference type="SUPFAM" id="SSF50104">
    <property type="entry name" value="Translation proteins SH3-like domain"/>
    <property type="match status" value="1"/>
</dbReference>
<dbReference type="PROSITE" id="PS01015">
    <property type="entry name" value="RIBOSOMAL_L19"/>
    <property type="match status" value="1"/>
</dbReference>
<proteinExistence type="inferred from homology"/>
<comment type="function">
    <text evidence="1">This protein is located at the 30S-50S ribosomal subunit interface and may play a role in the structure and function of the aminoacyl-tRNA binding site.</text>
</comment>
<comment type="similarity">
    <text evidence="1">Belongs to the bacterial ribosomal protein bL19 family.</text>
</comment>
<organism>
    <name type="scientific">Bacillus licheniformis (strain ATCC 14580 / DSM 13 / JCM 2505 / CCUG 7422 / NBRC 12200 / NCIMB 9375 / NCTC 10341 / NRRL NRS-1264 / Gibson 46)</name>
    <dbReference type="NCBI Taxonomy" id="279010"/>
    <lineage>
        <taxon>Bacteria</taxon>
        <taxon>Bacillati</taxon>
        <taxon>Bacillota</taxon>
        <taxon>Bacilli</taxon>
        <taxon>Bacillales</taxon>
        <taxon>Bacillaceae</taxon>
        <taxon>Bacillus</taxon>
    </lineage>
</organism>
<feature type="chain" id="PRO_0000163410" description="Large ribosomal subunit protein bL19">
    <location>
        <begin position="1"/>
        <end position="115"/>
    </location>
</feature>
<protein>
    <recommendedName>
        <fullName evidence="1">Large ribosomal subunit protein bL19</fullName>
    </recommendedName>
    <alternativeName>
        <fullName evidence="2">50S ribosomal protein L19</fullName>
    </alternativeName>
</protein>
<accession>Q65JP5</accession>
<accession>Q62V50</accession>
<evidence type="ECO:0000255" key="1">
    <source>
        <dbReference type="HAMAP-Rule" id="MF_00402"/>
    </source>
</evidence>
<evidence type="ECO:0000305" key="2"/>
<gene>
    <name evidence="1" type="primary">rplS</name>
    <name type="ordered locus">BLi01824</name>
    <name type="ordered locus">BL01290</name>
</gene>
<sequence>MQKLIEEITKEQLRTDLPAFRPGDTLRVHVKVVEGNRERIQVFEGVVIKRRGGGISETFTVRKISYGVGVERTFPLHTPKIAKIEVVRHGKVRRAKLYYLRELRGKAARIKEIRR</sequence>
<reference key="1">
    <citation type="journal article" date="2004" name="J. Mol. Microbiol. Biotechnol.">
        <title>The complete genome sequence of Bacillus licheniformis DSM13, an organism with great industrial potential.</title>
        <authorList>
            <person name="Veith B."/>
            <person name="Herzberg C."/>
            <person name="Steckel S."/>
            <person name="Feesche J."/>
            <person name="Maurer K.H."/>
            <person name="Ehrenreich P."/>
            <person name="Baeumer S."/>
            <person name="Henne A."/>
            <person name="Liesegang H."/>
            <person name="Merkl R."/>
            <person name="Ehrenreich A."/>
            <person name="Gottschalk G."/>
        </authorList>
    </citation>
    <scope>NUCLEOTIDE SEQUENCE [LARGE SCALE GENOMIC DNA]</scope>
    <source>
        <strain>ATCC 14580 / DSM 13 / JCM 2505 / CCUG 7422 / NBRC 12200 / NCIMB 9375 / NCTC 10341 / NRRL NRS-1264 / Gibson 46</strain>
    </source>
</reference>
<reference key="2">
    <citation type="journal article" date="2004" name="Genome Biol.">
        <title>Complete genome sequence of the industrial bacterium Bacillus licheniformis and comparisons with closely related Bacillus species.</title>
        <authorList>
            <person name="Rey M.W."/>
            <person name="Ramaiya P."/>
            <person name="Nelson B.A."/>
            <person name="Brody-Karpin S.D."/>
            <person name="Zaretsky E.J."/>
            <person name="Tang M."/>
            <person name="Lopez de Leon A."/>
            <person name="Xiang H."/>
            <person name="Gusti V."/>
            <person name="Clausen I.G."/>
            <person name="Olsen P.B."/>
            <person name="Rasmussen M.D."/>
            <person name="Andersen J.T."/>
            <person name="Joergensen P.L."/>
            <person name="Larsen T.S."/>
            <person name="Sorokin A."/>
            <person name="Bolotin A."/>
            <person name="Lapidus A."/>
            <person name="Galleron N."/>
            <person name="Ehrlich S.D."/>
            <person name="Berka R.M."/>
        </authorList>
    </citation>
    <scope>NUCLEOTIDE SEQUENCE [LARGE SCALE GENOMIC DNA]</scope>
    <source>
        <strain>ATCC 14580 / DSM 13 / JCM 2505 / CCUG 7422 / NBRC 12200 / NCIMB 9375 / NCTC 10341 / NRRL NRS-1264 / Gibson 46</strain>
    </source>
</reference>
<name>RL19_BACLD</name>
<keyword id="KW-1185">Reference proteome</keyword>
<keyword id="KW-0687">Ribonucleoprotein</keyword>
<keyword id="KW-0689">Ribosomal protein</keyword>